<gene>
    <name evidence="1" type="primary">prfA</name>
    <name type="ordered locus">LBF_3169</name>
</gene>
<keyword id="KW-0963">Cytoplasm</keyword>
<keyword id="KW-0488">Methylation</keyword>
<keyword id="KW-0648">Protein biosynthesis</keyword>
<name>RF1_LEPBA</name>
<dbReference type="EMBL" id="CP000777">
    <property type="protein sequence ID" value="ABZ95638.1"/>
    <property type="molecule type" value="Genomic_DNA"/>
</dbReference>
<dbReference type="RefSeq" id="WP_012390203.1">
    <property type="nucleotide sequence ID" value="NC_010842.1"/>
</dbReference>
<dbReference type="SMR" id="B0SH84"/>
<dbReference type="KEGG" id="lbf:LBF_3169"/>
<dbReference type="HOGENOM" id="CLU_036856_0_1_12"/>
<dbReference type="GO" id="GO:0005737">
    <property type="term" value="C:cytoplasm"/>
    <property type="evidence" value="ECO:0007669"/>
    <property type="project" value="UniProtKB-SubCell"/>
</dbReference>
<dbReference type="GO" id="GO:0016149">
    <property type="term" value="F:translation release factor activity, codon specific"/>
    <property type="evidence" value="ECO:0007669"/>
    <property type="project" value="UniProtKB-UniRule"/>
</dbReference>
<dbReference type="FunFam" id="3.30.160.20:FF:000004">
    <property type="entry name" value="Peptide chain release factor 1"/>
    <property type="match status" value="1"/>
</dbReference>
<dbReference type="FunFam" id="3.30.70.1660:FF:000002">
    <property type="entry name" value="Peptide chain release factor 1"/>
    <property type="match status" value="1"/>
</dbReference>
<dbReference type="FunFam" id="3.30.70.1660:FF:000004">
    <property type="entry name" value="Peptide chain release factor 1"/>
    <property type="match status" value="1"/>
</dbReference>
<dbReference type="Gene3D" id="3.30.160.20">
    <property type="match status" value="1"/>
</dbReference>
<dbReference type="Gene3D" id="3.30.70.1660">
    <property type="match status" value="1"/>
</dbReference>
<dbReference type="Gene3D" id="6.10.140.1950">
    <property type="match status" value="1"/>
</dbReference>
<dbReference type="HAMAP" id="MF_00093">
    <property type="entry name" value="Rel_fac_1"/>
    <property type="match status" value="1"/>
</dbReference>
<dbReference type="InterPro" id="IPR005139">
    <property type="entry name" value="PCRF"/>
</dbReference>
<dbReference type="InterPro" id="IPR000352">
    <property type="entry name" value="Pep_chain_release_fac_I"/>
</dbReference>
<dbReference type="InterPro" id="IPR045853">
    <property type="entry name" value="Pep_chain_release_fac_I_sf"/>
</dbReference>
<dbReference type="InterPro" id="IPR050057">
    <property type="entry name" value="Prokaryotic/Mito_RF"/>
</dbReference>
<dbReference type="InterPro" id="IPR004373">
    <property type="entry name" value="RF-1"/>
</dbReference>
<dbReference type="NCBIfam" id="TIGR00019">
    <property type="entry name" value="prfA"/>
    <property type="match status" value="1"/>
</dbReference>
<dbReference type="NCBIfam" id="NF001859">
    <property type="entry name" value="PRK00591.1"/>
    <property type="match status" value="1"/>
</dbReference>
<dbReference type="PANTHER" id="PTHR43804">
    <property type="entry name" value="LD18447P"/>
    <property type="match status" value="1"/>
</dbReference>
<dbReference type="PANTHER" id="PTHR43804:SF7">
    <property type="entry name" value="LD18447P"/>
    <property type="match status" value="1"/>
</dbReference>
<dbReference type="Pfam" id="PF03462">
    <property type="entry name" value="PCRF"/>
    <property type="match status" value="1"/>
</dbReference>
<dbReference type="Pfam" id="PF00472">
    <property type="entry name" value="RF-1"/>
    <property type="match status" value="1"/>
</dbReference>
<dbReference type="SMART" id="SM00937">
    <property type="entry name" value="PCRF"/>
    <property type="match status" value="1"/>
</dbReference>
<dbReference type="SUPFAM" id="SSF75620">
    <property type="entry name" value="Release factor"/>
    <property type="match status" value="1"/>
</dbReference>
<dbReference type="PROSITE" id="PS00745">
    <property type="entry name" value="RF_PROK_I"/>
    <property type="match status" value="1"/>
</dbReference>
<reference key="1">
    <citation type="journal article" date="2008" name="PLoS ONE">
        <title>Genome sequence of the saprophyte Leptospira biflexa provides insights into the evolution of Leptospira and the pathogenesis of leptospirosis.</title>
        <authorList>
            <person name="Picardeau M."/>
            <person name="Bulach D.M."/>
            <person name="Bouchier C."/>
            <person name="Zuerner R.L."/>
            <person name="Zidane N."/>
            <person name="Wilson P.J."/>
            <person name="Creno S."/>
            <person name="Kuczek E.S."/>
            <person name="Bommezzadri S."/>
            <person name="Davis J.C."/>
            <person name="McGrath A."/>
            <person name="Johnson M.J."/>
            <person name="Boursaux-Eude C."/>
            <person name="Seemann T."/>
            <person name="Rouy Z."/>
            <person name="Coppel R.L."/>
            <person name="Rood J.I."/>
            <person name="Lajus A."/>
            <person name="Davies J.K."/>
            <person name="Medigue C."/>
            <person name="Adler B."/>
        </authorList>
    </citation>
    <scope>NUCLEOTIDE SEQUENCE [LARGE SCALE GENOMIC DNA]</scope>
    <source>
        <strain>Patoc 1 / Ames</strain>
    </source>
</reference>
<accession>B0SH84</accession>
<organism>
    <name type="scientific">Leptospira biflexa serovar Patoc (strain Patoc 1 / Ames)</name>
    <dbReference type="NCBI Taxonomy" id="355278"/>
    <lineage>
        <taxon>Bacteria</taxon>
        <taxon>Pseudomonadati</taxon>
        <taxon>Spirochaetota</taxon>
        <taxon>Spirochaetia</taxon>
        <taxon>Leptospirales</taxon>
        <taxon>Leptospiraceae</taxon>
        <taxon>Leptospira</taxon>
    </lineage>
</organism>
<sequence length="353" mass="39502">MIDRLKKIQEKYLRIEDELAKATASDTLKNLSKERSRLTPVYTKADEYLKITKDCQDAKSLLESENDPDMHSMLKSEIEEGEKKLEELAKELEIMLLPPDPNSGKSILVEIRAGTGGEESGLFCADLFRMYNKYADKKGLRVEIIDMSQTGIGGYKEIVFSLDDDKAYDLFKFESGTHRVQRIPETESGGRIHTSAVTVAILPEAEEKEVEIKESDLRIDVYRSSGAGGQHVNTTDSAVRITHIPTGIVVASQEERSQIKNRDKAMRVLRARIADQAAETAKLSADALKKAQVGSGDRSERIRTYNFPQGRCTDHRIGFTSHNLPAIMEGDLDELIDALIQEDRSKRLAEAKA</sequence>
<comment type="function">
    <text evidence="1">Peptide chain release factor 1 directs the termination of translation in response to the peptide chain termination codons UAG and UAA.</text>
</comment>
<comment type="subcellular location">
    <subcellularLocation>
        <location evidence="1">Cytoplasm</location>
    </subcellularLocation>
</comment>
<comment type="PTM">
    <text evidence="1">Methylated by PrmC. Methylation increases the termination efficiency of RF1.</text>
</comment>
<comment type="similarity">
    <text evidence="1">Belongs to the prokaryotic/mitochondrial release factor family.</text>
</comment>
<evidence type="ECO:0000255" key="1">
    <source>
        <dbReference type="HAMAP-Rule" id="MF_00093"/>
    </source>
</evidence>
<proteinExistence type="inferred from homology"/>
<protein>
    <recommendedName>
        <fullName evidence="1">Peptide chain release factor 1</fullName>
        <shortName evidence="1">RF-1</shortName>
    </recommendedName>
</protein>
<feature type="chain" id="PRO_1000093470" description="Peptide chain release factor 1">
    <location>
        <begin position="1"/>
        <end position="353"/>
    </location>
</feature>
<feature type="modified residue" description="N5-methylglutamine" evidence="1">
    <location>
        <position position="230"/>
    </location>
</feature>